<comment type="subunit">
    <text evidence="1">Homodimer.</text>
</comment>
<comment type="subcellular location">
    <subcellularLocation>
        <location evidence="1">Cytoplasm</location>
    </subcellularLocation>
</comment>
<comment type="similarity">
    <text evidence="1">Belongs to the 4-oxalocrotonate tautomerase family. PptA subfamily.</text>
</comment>
<feature type="initiator methionine" description="Removed" evidence="1">
    <location>
        <position position="1"/>
    </location>
</feature>
<feature type="chain" id="PRO_0000348341" description="Tautomerase PptA">
    <location>
        <begin position="2"/>
        <end position="77"/>
    </location>
</feature>
<feature type="active site" description="Proton acceptor; via imino nitrogen" evidence="1">
    <location>
        <position position="2"/>
    </location>
</feature>
<evidence type="ECO:0000255" key="1">
    <source>
        <dbReference type="HAMAP-Rule" id="MF_00718"/>
    </source>
</evidence>
<gene>
    <name evidence="1" type="primary">pptA</name>
    <name type="ordered locus">ECDH10B_1592</name>
</gene>
<proteinExistence type="inferred from homology"/>
<accession>B1XDG9</accession>
<name>PPTA_ECODH</name>
<keyword id="KW-0963">Cytoplasm</keyword>
<keyword id="KW-0413">Isomerase</keyword>
<organism>
    <name type="scientific">Escherichia coli (strain K12 / DH10B)</name>
    <dbReference type="NCBI Taxonomy" id="316385"/>
    <lineage>
        <taxon>Bacteria</taxon>
        <taxon>Pseudomonadati</taxon>
        <taxon>Pseudomonadota</taxon>
        <taxon>Gammaproteobacteria</taxon>
        <taxon>Enterobacterales</taxon>
        <taxon>Enterobacteriaceae</taxon>
        <taxon>Escherichia</taxon>
    </lineage>
</organism>
<dbReference type="EC" id="5.3.2.-" evidence="1"/>
<dbReference type="EMBL" id="CP000948">
    <property type="protein sequence ID" value="ACB02674.1"/>
    <property type="molecule type" value="Genomic_DNA"/>
</dbReference>
<dbReference type="RefSeq" id="WP_001120143.1">
    <property type="nucleotide sequence ID" value="NC_010473.1"/>
</dbReference>
<dbReference type="SMR" id="B1XDG9"/>
<dbReference type="KEGG" id="ecd:ECDH10B_1592"/>
<dbReference type="HOGENOM" id="CLU_183611_0_1_6"/>
<dbReference type="GO" id="GO:0005737">
    <property type="term" value="C:cytoplasm"/>
    <property type="evidence" value="ECO:0007669"/>
    <property type="project" value="UniProtKB-SubCell"/>
</dbReference>
<dbReference type="GO" id="GO:0016862">
    <property type="term" value="F:intramolecular oxidoreductase activity, interconverting keto- and enol-groups"/>
    <property type="evidence" value="ECO:0007669"/>
    <property type="project" value="UniProtKB-UniRule"/>
</dbReference>
<dbReference type="Gene3D" id="3.30.429.10">
    <property type="entry name" value="Macrophage Migration Inhibitory Factor"/>
    <property type="match status" value="1"/>
</dbReference>
<dbReference type="HAMAP" id="MF_00718">
    <property type="entry name" value="Tautomerase_PptA"/>
    <property type="match status" value="1"/>
</dbReference>
<dbReference type="InterPro" id="IPR004370">
    <property type="entry name" value="4-OT-like_dom"/>
</dbReference>
<dbReference type="InterPro" id="IPR014347">
    <property type="entry name" value="Tautomerase/MIF_sf"/>
</dbReference>
<dbReference type="InterPro" id="IPR017284">
    <property type="entry name" value="Tautomerase_PptA"/>
</dbReference>
<dbReference type="NCBIfam" id="NF002324">
    <property type="entry name" value="PRK01271.1"/>
    <property type="match status" value="1"/>
</dbReference>
<dbReference type="Pfam" id="PF01361">
    <property type="entry name" value="Tautomerase"/>
    <property type="match status" value="1"/>
</dbReference>
<dbReference type="PIRSF" id="PIRSF037799">
    <property type="entry name" value="Tautomer_YdcE_prd"/>
    <property type="match status" value="1"/>
</dbReference>
<dbReference type="SUPFAM" id="SSF55331">
    <property type="entry name" value="Tautomerase/MIF"/>
    <property type="match status" value="1"/>
</dbReference>
<reference key="1">
    <citation type="journal article" date="2008" name="J. Bacteriol.">
        <title>The complete genome sequence of Escherichia coli DH10B: insights into the biology of a laboratory workhorse.</title>
        <authorList>
            <person name="Durfee T."/>
            <person name="Nelson R."/>
            <person name="Baldwin S."/>
            <person name="Plunkett G. III"/>
            <person name="Burland V."/>
            <person name="Mau B."/>
            <person name="Petrosino J.F."/>
            <person name="Qin X."/>
            <person name="Muzny D.M."/>
            <person name="Ayele M."/>
            <person name="Gibbs R.A."/>
            <person name="Csorgo B."/>
            <person name="Posfai G."/>
            <person name="Weinstock G.M."/>
            <person name="Blattner F.R."/>
        </authorList>
    </citation>
    <scope>NUCLEOTIDE SEQUENCE [LARGE SCALE GENOMIC DNA]</scope>
    <source>
        <strain>K12 / DH10B</strain>
    </source>
</reference>
<sequence>MPHIDIKCFPRELDEQQKAALAADITDVIIRHLNSKDSSISIALQQIQPESWQAIWDAEIAPQMEALIKKPGYSMNA</sequence>
<protein>
    <recommendedName>
        <fullName evidence="1">Tautomerase PptA</fullName>
        <ecNumber evidence="1">5.3.2.-</ecNumber>
    </recommendedName>
</protein>